<gene>
    <name evidence="1" type="primary">pgi</name>
    <name type="ordered locus">XOO2242</name>
</gene>
<reference key="1">
    <citation type="journal article" date="2005" name="Jpn. Agric. Res. Q.">
        <title>Genome sequence of Xanthomonas oryzae pv. oryzae suggests contribution of large numbers of effector genes and insertion sequences to its race diversity.</title>
        <authorList>
            <person name="Ochiai H."/>
            <person name="Inoue Y."/>
            <person name="Takeya M."/>
            <person name="Sasaki A."/>
            <person name="Kaku H."/>
        </authorList>
    </citation>
    <scope>NUCLEOTIDE SEQUENCE [LARGE SCALE GENOMIC DNA]</scope>
    <source>
        <strain>MAFF 311018</strain>
    </source>
</reference>
<proteinExistence type="inferred from homology"/>
<name>G6PI_XANOM</name>
<dbReference type="EC" id="5.3.1.9" evidence="1"/>
<dbReference type="EMBL" id="AP008229">
    <property type="protein sequence ID" value="BAE68997.1"/>
    <property type="molecule type" value="Genomic_DNA"/>
</dbReference>
<dbReference type="RefSeq" id="WP_011408565.1">
    <property type="nucleotide sequence ID" value="NC_007705.1"/>
</dbReference>
<dbReference type="SMR" id="Q2P380"/>
<dbReference type="KEGG" id="xom:XOO2242"/>
<dbReference type="HOGENOM" id="CLU_017947_3_1_6"/>
<dbReference type="UniPathway" id="UPA00109">
    <property type="reaction ID" value="UER00181"/>
</dbReference>
<dbReference type="UniPathway" id="UPA00138"/>
<dbReference type="GO" id="GO:0005829">
    <property type="term" value="C:cytosol"/>
    <property type="evidence" value="ECO:0007669"/>
    <property type="project" value="TreeGrafter"/>
</dbReference>
<dbReference type="GO" id="GO:0097367">
    <property type="term" value="F:carbohydrate derivative binding"/>
    <property type="evidence" value="ECO:0007669"/>
    <property type="project" value="InterPro"/>
</dbReference>
<dbReference type="GO" id="GO:0004347">
    <property type="term" value="F:glucose-6-phosphate isomerase activity"/>
    <property type="evidence" value="ECO:0007669"/>
    <property type="project" value="UniProtKB-UniRule"/>
</dbReference>
<dbReference type="GO" id="GO:0048029">
    <property type="term" value="F:monosaccharide binding"/>
    <property type="evidence" value="ECO:0007669"/>
    <property type="project" value="TreeGrafter"/>
</dbReference>
<dbReference type="GO" id="GO:0006094">
    <property type="term" value="P:gluconeogenesis"/>
    <property type="evidence" value="ECO:0007669"/>
    <property type="project" value="UniProtKB-UniRule"/>
</dbReference>
<dbReference type="GO" id="GO:0051156">
    <property type="term" value="P:glucose 6-phosphate metabolic process"/>
    <property type="evidence" value="ECO:0007669"/>
    <property type="project" value="TreeGrafter"/>
</dbReference>
<dbReference type="GO" id="GO:0006096">
    <property type="term" value="P:glycolytic process"/>
    <property type="evidence" value="ECO:0007669"/>
    <property type="project" value="UniProtKB-UniRule"/>
</dbReference>
<dbReference type="CDD" id="cd05015">
    <property type="entry name" value="SIS_PGI_1"/>
    <property type="match status" value="1"/>
</dbReference>
<dbReference type="CDD" id="cd05016">
    <property type="entry name" value="SIS_PGI_2"/>
    <property type="match status" value="1"/>
</dbReference>
<dbReference type="Gene3D" id="1.10.1390.10">
    <property type="match status" value="1"/>
</dbReference>
<dbReference type="Gene3D" id="3.40.50.10490">
    <property type="entry name" value="Glucose-6-phosphate isomerase like protein, domain 1"/>
    <property type="match status" value="2"/>
</dbReference>
<dbReference type="HAMAP" id="MF_00473">
    <property type="entry name" value="G6P_isomerase"/>
    <property type="match status" value="1"/>
</dbReference>
<dbReference type="InterPro" id="IPR001672">
    <property type="entry name" value="G6P_Isomerase"/>
</dbReference>
<dbReference type="InterPro" id="IPR023096">
    <property type="entry name" value="G6P_Isomerase_C"/>
</dbReference>
<dbReference type="InterPro" id="IPR018189">
    <property type="entry name" value="Phosphoglucose_isomerase_CS"/>
</dbReference>
<dbReference type="InterPro" id="IPR046348">
    <property type="entry name" value="SIS_dom_sf"/>
</dbReference>
<dbReference type="InterPro" id="IPR035476">
    <property type="entry name" value="SIS_PGI_1"/>
</dbReference>
<dbReference type="InterPro" id="IPR035482">
    <property type="entry name" value="SIS_PGI_2"/>
</dbReference>
<dbReference type="NCBIfam" id="NF001211">
    <property type="entry name" value="PRK00179.1"/>
    <property type="match status" value="1"/>
</dbReference>
<dbReference type="PANTHER" id="PTHR11469">
    <property type="entry name" value="GLUCOSE-6-PHOSPHATE ISOMERASE"/>
    <property type="match status" value="1"/>
</dbReference>
<dbReference type="PANTHER" id="PTHR11469:SF1">
    <property type="entry name" value="GLUCOSE-6-PHOSPHATE ISOMERASE"/>
    <property type="match status" value="1"/>
</dbReference>
<dbReference type="Pfam" id="PF00342">
    <property type="entry name" value="PGI"/>
    <property type="match status" value="1"/>
</dbReference>
<dbReference type="PRINTS" id="PR00662">
    <property type="entry name" value="G6PISOMERASE"/>
</dbReference>
<dbReference type="SUPFAM" id="SSF53697">
    <property type="entry name" value="SIS domain"/>
    <property type="match status" value="1"/>
</dbReference>
<dbReference type="PROSITE" id="PS00765">
    <property type="entry name" value="P_GLUCOSE_ISOMERASE_1"/>
    <property type="match status" value="1"/>
</dbReference>
<dbReference type="PROSITE" id="PS00174">
    <property type="entry name" value="P_GLUCOSE_ISOMERASE_2"/>
    <property type="match status" value="1"/>
</dbReference>
<dbReference type="PROSITE" id="PS51463">
    <property type="entry name" value="P_GLUCOSE_ISOMERASE_3"/>
    <property type="match status" value="1"/>
</dbReference>
<accession>Q2P380</accession>
<evidence type="ECO:0000255" key="1">
    <source>
        <dbReference type="HAMAP-Rule" id="MF_00473"/>
    </source>
</evidence>
<sequence>MTQTNGFDALHAHAQRLRGAAIPALLAAEPERPTQYAWQVGPLYFNFARQKYDRAALDALFAIARERDLAGAFQRLFRGEQVNVTEQRAALHTALRGDLTDAPVASECYATAAEVRERMGALIQQLEATDVTDIVSVGIGGSDLGPRLVADALRPVSGARLRVHFVSNVDGAAMQRTLATLDPARTAGILISKTFGTQETLLNGSILHAWLGGSERLYAVSANPERAAKAFDIAPGRVLPMWDWVGGRYSLWSAVGFPIALAIGFERFEQLLEGAAQFDAHALNTPLEENVAVLHGLTAVWNRNLLGSATHAVMTYDQRLALLPAYLQQLVMESLGKRVKLDGSAVDSDTVSVWWGGAGTDVQHSFFQALHQGTSVVPADFIGTVHNDDPYAENHVALMANVLAQTEALANGQDSSDPHRSYPGGRPSTVILLDALTPQALGALISMYEHSVYVQSVMWGINAFDQFGVELGKQLASQLLPALKGESADVADPVTRELLSKLRG</sequence>
<organism>
    <name type="scientific">Xanthomonas oryzae pv. oryzae (strain MAFF 311018)</name>
    <dbReference type="NCBI Taxonomy" id="342109"/>
    <lineage>
        <taxon>Bacteria</taxon>
        <taxon>Pseudomonadati</taxon>
        <taxon>Pseudomonadota</taxon>
        <taxon>Gammaproteobacteria</taxon>
        <taxon>Lysobacterales</taxon>
        <taxon>Lysobacteraceae</taxon>
        <taxon>Xanthomonas</taxon>
    </lineage>
</organism>
<feature type="chain" id="PRO_0000230943" description="Glucose-6-phosphate isomerase">
    <location>
        <begin position="1"/>
        <end position="504"/>
    </location>
</feature>
<feature type="active site" description="Proton donor" evidence="1">
    <location>
        <position position="333"/>
    </location>
</feature>
<feature type="active site" evidence="1">
    <location>
        <position position="364"/>
    </location>
</feature>
<feature type="active site" evidence="1">
    <location>
        <position position="473"/>
    </location>
</feature>
<keyword id="KW-0963">Cytoplasm</keyword>
<keyword id="KW-0312">Gluconeogenesis</keyword>
<keyword id="KW-0324">Glycolysis</keyword>
<keyword id="KW-0413">Isomerase</keyword>
<protein>
    <recommendedName>
        <fullName evidence="1">Glucose-6-phosphate isomerase</fullName>
        <shortName evidence="1">GPI</shortName>
        <ecNumber evidence="1">5.3.1.9</ecNumber>
    </recommendedName>
    <alternativeName>
        <fullName evidence="1">Phosphoglucose isomerase</fullName>
        <shortName evidence="1">PGI</shortName>
    </alternativeName>
    <alternativeName>
        <fullName evidence="1">Phosphohexose isomerase</fullName>
        <shortName evidence="1">PHI</shortName>
    </alternativeName>
</protein>
<comment type="function">
    <text evidence="1">Catalyzes the reversible isomerization of glucose-6-phosphate to fructose-6-phosphate.</text>
</comment>
<comment type="catalytic activity">
    <reaction evidence="1">
        <text>alpha-D-glucose 6-phosphate = beta-D-fructose 6-phosphate</text>
        <dbReference type="Rhea" id="RHEA:11816"/>
        <dbReference type="ChEBI" id="CHEBI:57634"/>
        <dbReference type="ChEBI" id="CHEBI:58225"/>
        <dbReference type="EC" id="5.3.1.9"/>
    </reaction>
</comment>
<comment type="pathway">
    <text evidence="1">Carbohydrate biosynthesis; gluconeogenesis.</text>
</comment>
<comment type="pathway">
    <text evidence="1">Carbohydrate degradation; glycolysis; D-glyceraldehyde 3-phosphate and glycerone phosphate from D-glucose: step 2/4.</text>
</comment>
<comment type="subcellular location">
    <subcellularLocation>
        <location evidence="1">Cytoplasm</location>
    </subcellularLocation>
</comment>
<comment type="similarity">
    <text evidence="1">Belongs to the GPI family.</text>
</comment>